<protein>
    <recommendedName>
        <fullName>Methionine--tRNA ligase</fullName>
        <ecNumber>6.1.1.10</ecNumber>
    </recommendedName>
    <alternativeName>
        <fullName>Methionyl-tRNA synthetase</fullName>
        <shortName>MetRS</shortName>
    </alternativeName>
</protein>
<gene>
    <name type="primary">metG</name>
    <name type="synonym">metS</name>
    <name type="ordered locus">spyM18_0468</name>
</gene>
<proteinExistence type="inferred from homology"/>
<feature type="chain" id="PRO_0000139255" description="Methionine--tRNA ligase">
    <location>
        <begin position="1"/>
        <end position="665"/>
    </location>
</feature>
<feature type="domain" description="tRNA-binding">
    <location>
        <begin position="562"/>
        <end position="665"/>
    </location>
</feature>
<feature type="short sequence motif" description="'HIGH' region">
    <location>
        <begin position="12"/>
        <end position="22"/>
    </location>
</feature>
<feature type="short sequence motif" description="'KMSKS' region">
    <location>
        <begin position="308"/>
        <end position="312"/>
    </location>
</feature>
<feature type="binding site" evidence="1">
    <location>
        <position position="311"/>
    </location>
    <ligand>
        <name>ATP</name>
        <dbReference type="ChEBI" id="CHEBI:30616"/>
    </ligand>
</feature>
<name>SYM_STRP8</name>
<keyword id="KW-0030">Aminoacyl-tRNA synthetase</keyword>
<keyword id="KW-0067">ATP-binding</keyword>
<keyword id="KW-0963">Cytoplasm</keyword>
<keyword id="KW-0436">Ligase</keyword>
<keyword id="KW-0547">Nucleotide-binding</keyword>
<keyword id="KW-0648">Protein biosynthesis</keyword>
<keyword id="KW-0694">RNA-binding</keyword>
<keyword id="KW-0820">tRNA-binding</keyword>
<sequence>MKKPFYITTPIYYPSGKLHIGSAYTTIACDVLARYKRLMGHEVFYLTGLDEHGQKIQTKAKEAGISPQTYVDNMAKDVKALWQLLDISYDTFIRTTDDYHEEVVAAVFEKLLAQDDIYLGEYSGWYSVSDEEFFTESQLKEVFRDEDGQVIGGIAPSGHEVEWVSEESYFLRLSKYADRLVAFFKERPDFIQPDGRMNEMVKNFIEPGLEDLAVSRTTFTWGVPVPSDPKHVVYVWIDALLNYATALGYGQANHANFDKFWNGTVFHMVGKDILRFHSIYWPILLMMLDLPMPDRLIAHGWFVMKDGKMSKSKGNVVYPEMLVERFGLDPLRYYLMRSLPVGSDGTFTPEDYVGRINYELANDLGNLLNRTVAMINKYFDGTVPAYVDNGTAFDADLSQLIDAQLADYHKHMEAVDYPRALEAVWTIIARTNKYIDETAPWVLAKEDGDKAQLASVMAHLAASLRVVAHVIQPFMMETSAAIMAQLGLAPVSDLSTLALADFPANTKVVAKGTPIFPRLDMEAEIDYIKAQMGDSSAISQEKEWVPEEVALKSEKDVITFETFDAVEIRVAEVKEVSKVEGSEKLLRFRVDAGDGQDRQILSGIAKFYPNEQELVGKKLQIVANLKPRKMVKKYISQGMILSAEHGDQLTVLTVDSSVPNGSIIG</sequence>
<accession>Q8P298</accession>
<comment type="function">
    <text evidence="1">Is required not only for elongation of protein synthesis but also for the initiation of all mRNA translation through initiator tRNA(fMet) aminoacylation.</text>
</comment>
<comment type="catalytic activity">
    <reaction>
        <text>tRNA(Met) + L-methionine + ATP = L-methionyl-tRNA(Met) + AMP + diphosphate</text>
        <dbReference type="Rhea" id="RHEA:13481"/>
        <dbReference type="Rhea" id="RHEA-COMP:9667"/>
        <dbReference type="Rhea" id="RHEA-COMP:9698"/>
        <dbReference type="ChEBI" id="CHEBI:30616"/>
        <dbReference type="ChEBI" id="CHEBI:33019"/>
        <dbReference type="ChEBI" id="CHEBI:57844"/>
        <dbReference type="ChEBI" id="CHEBI:78442"/>
        <dbReference type="ChEBI" id="CHEBI:78530"/>
        <dbReference type="ChEBI" id="CHEBI:456215"/>
        <dbReference type="EC" id="6.1.1.10"/>
    </reaction>
</comment>
<comment type="subunit">
    <text evidence="1">Homodimer.</text>
</comment>
<comment type="subcellular location">
    <subcellularLocation>
        <location evidence="1">Cytoplasm</location>
    </subcellularLocation>
</comment>
<comment type="similarity">
    <text evidence="2">Belongs to the class-I aminoacyl-tRNA synthetase family. MetG type 2B subfamily.</text>
</comment>
<dbReference type="EC" id="6.1.1.10"/>
<dbReference type="EMBL" id="AE009949">
    <property type="protein sequence ID" value="AAL97197.1"/>
    <property type="molecule type" value="Genomic_DNA"/>
</dbReference>
<dbReference type="SMR" id="Q8P298"/>
<dbReference type="KEGG" id="spm:spyM18_0468"/>
<dbReference type="HOGENOM" id="CLU_009710_9_4_9"/>
<dbReference type="GO" id="GO:0005737">
    <property type="term" value="C:cytoplasm"/>
    <property type="evidence" value="ECO:0007669"/>
    <property type="project" value="UniProtKB-SubCell"/>
</dbReference>
<dbReference type="GO" id="GO:0005524">
    <property type="term" value="F:ATP binding"/>
    <property type="evidence" value="ECO:0007669"/>
    <property type="project" value="UniProtKB-UniRule"/>
</dbReference>
<dbReference type="GO" id="GO:0004825">
    <property type="term" value="F:methionine-tRNA ligase activity"/>
    <property type="evidence" value="ECO:0007669"/>
    <property type="project" value="UniProtKB-UniRule"/>
</dbReference>
<dbReference type="GO" id="GO:0000049">
    <property type="term" value="F:tRNA binding"/>
    <property type="evidence" value="ECO:0007669"/>
    <property type="project" value="UniProtKB-KW"/>
</dbReference>
<dbReference type="GO" id="GO:0006431">
    <property type="term" value="P:methionyl-tRNA aminoacylation"/>
    <property type="evidence" value="ECO:0007669"/>
    <property type="project" value="UniProtKB-UniRule"/>
</dbReference>
<dbReference type="CDD" id="cd07957">
    <property type="entry name" value="Anticodon_Ia_Met"/>
    <property type="match status" value="1"/>
</dbReference>
<dbReference type="CDD" id="cd00814">
    <property type="entry name" value="MetRS_core"/>
    <property type="match status" value="1"/>
</dbReference>
<dbReference type="CDD" id="cd02800">
    <property type="entry name" value="tRNA_bind_EcMetRS_like"/>
    <property type="match status" value="1"/>
</dbReference>
<dbReference type="FunFam" id="1.10.730.10:FF:000026">
    <property type="entry name" value="Methionine--tRNA ligase"/>
    <property type="match status" value="1"/>
</dbReference>
<dbReference type="FunFam" id="2.170.220.10:FF:000002">
    <property type="entry name" value="Methionine--tRNA ligase"/>
    <property type="match status" value="1"/>
</dbReference>
<dbReference type="FunFam" id="2.40.50.140:FF:000042">
    <property type="entry name" value="Methionine--tRNA ligase"/>
    <property type="match status" value="1"/>
</dbReference>
<dbReference type="Gene3D" id="2.170.220.10">
    <property type="match status" value="1"/>
</dbReference>
<dbReference type="Gene3D" id="3.40.50.620">
    <property type="entry name" value="HUPs"/>
    <property type="match status" value="1"/>
</dbReference>
<dbReference type="Gene3D" id="1.10.730.10">
    <property type="entry name" value="Isoleucyl-tRNA Synthetase, Domain 1"/>
    <property type="match status" value="1"/>
</dbReference>
<dbReference type="Gene3D" id="2.40.50.140">
    <property type="entry name" value="Nucleic acid-binding proteins"/>
    <property type="match status" value="1"/>
</dbReference>
<dbReference type="HAMAP" id="MF_01228">
    <property type="entry name" value="Met_tRNA_synth_type2"/>
    <property type="match status" value="1"/>
</dbReference>
<dbReference type="InterPro" id="IPR041872">
    <property type="entry name" value="Anticodon_Met"/>
</dbReference>
<dbReference type="InterPro" id="IPR004495">
    <property type="entry name" value="Met-tRNA-synth_bsu_C"/>
</dbReference>
<dbReference type="InterPro" id="IPR014758">
    <property type="entry name" value="Met-tRNA_synth"/>
</dbReference>
<dbReference type="InterPro" id="IPR023457">
    <property type="entry name" value="Met-tRNA_synth_2"/>
</dbReference>
<dbReference type="InterPro" id="IPR015413">
    <property type="entry name" value="Methionyl/Leucyl_tRNA_Synth"/>
</dbReference>
<dbReference type="InterPro" id="IPR033911">
    <property type="entry name" value="MetRS_core"/>
</dbReference>
<dbReference type="InterPro" id="IPR012340">
    <property type="entry name" value="NA-bd_OB-fold"/>
</dbReference>
<dbReference type="InterPro" id="IPR014729">
    <property type="entry name" value="Rossmann-like_a/b/a_fold"/>
</dbReference>
<dbReference type="InterPro" id="IPR002547">
    <property type="entry name" value="tRNA-bd_dom"/>
</dbReference>
<dbReference type="InterPro" id="IPR009080">
    <property type="entry name" value="tRNAsynth_Ia_anticodon-bd"/>
</dbReference>
<dbReference type="NCBIfam" id="TIGR00398">
    <property type="entry name" value="metG"/>
    <property type="match status" value="1"/>
</dbReference>
<dbReference type="NCBIfam" id="TIGR00399">
    <property type="entry name" value="metG_C_term"/>
    <property type="match status" value="1"/>
</dbReference>
<dbReference type="NCBIfam" id="NF008900">
    <property type="entry name" value="PRK12267.1"/>
    <property type="match status" value="1"/>
</dbReference>
<dbReference type="PANTHER" id="PTHR43326:SF1">
    <property type="entry name" value="METHIONINE--TRNA LIGASE, MITOCHONDRIAL"/>
    <property type="match status" value="1"/>
</dbReference>
<dbReference type="PANTHER" id="PTHR43326">
    <property type="entry name" value="METHIONYL-TRNA SYNTHETASE"/>
    <property type="match status" value="1"/>
</dbReference>
<dbReference type="Pfam" id="PF19303">
    <property type="entry name" value="Anticodon_3"/>
    <property type="match status" value="1"/>
</dbReference>
<dbReference type="Pfam" id="PF09334">
    <property type="entry name" value="tRNA-synt_1g"/>
    <property type="match status" value="1"/>
</dbReference>
<dbReference type="Pfam" id="PF01588">
    <property type="entry name" value="tRNA_bind"/>
    <property type="match status" value="1"/>
</dbReference>
<dbReference type="PRINTS" id="PR01041">
    <property type="entry name" value="TRNASYNTHMET"/>
</dbReference>
<dbReference type="SUPFAM" id="SSF47323">
    <property type="entry name" value="Anticodon-binding domain of a subclass of class I aminoacyl-tRNA synthetases"/>
    <property type="match status" value="1"/>
</dbReference>
<dbReference type="SUPFAM" id="SSF50249">
    <property type="entry name" value="Nucleic acid-binding proteins"/>
    <property type="match status" value="1"/>
</dbReference>
<dbReference type="SUPFAM" id="SSF52374">
    <property type="entry name" value="Nucleotidylyl transferase"/>
    <property type="match status" value="1"/>
</dbReference>
<dbReference type="PROSITE" id="PS50886">
    <property type="entry name" value="TRBD"/>
    <property type="match status" value="1"/>
</dbReference>
<organism>
    <name type="scientific">Streptococcus pyogenes serotype M18 (strain MGAS8232)</name>
    <dbReference type="NCBI Taxonomy" id="186103"/>
    <lineage>
        <taxon>Bacteria</taxon>
        <taxon>Bacillati</taxon>
        <taxon>Bacillota</taxon>
        <taxon>Bacilli</taxon>
        <taxon>Lactobacillales</taxon>
        <taxon>Streptococcaceae</taxon>
        <taxon>Streptococcus</taxon>
    </lineage>
</organism>
<reference key="1">
    <citation type="journal article" date="2002" name="Proc. Natl. Acad. Sci. U.S.A.">
        <title>Genome sequence and comparative microarray analysis of serotype M18 group A Streptococcus strains associated with acute rheumatic fever outbreaks.</title>
        <authorList>
            <person name="Smoot J.C."/>
            <person name="Barbian K.D."/>
            <person name="Van Gompel J.J."/>
            <person name="Smoot L.M."/>
            <person name="Chaussee M.S."/>
            <person name="Sylva G.L."/>
            <person name="Sturdevant D.E."/>
            <person name="Ricklefs S.M."/>
            <person name="Porcella S.F."/>
            <person name="Parkins L.D."/>
            <person name="Beres S.B."/>
            <person name="Campbell D.S."/>
            <person name="Smith T.M."/>
            <person name="Zhang Q."/>
            <person name="Kapur V."/>
            <person name="Daly J.A."/>
            <person name="Veasy L.G."/>
            <person name="Musser J.M."/>
        </authorList>
    </citation>
    <scope>NUCLEOTIDE SEQUENCE [LARGE SCALE GENOMIC DNA]</scope>
    <source>
        <strain>MGAS8232</strain>
    </source>
</reference>
<evidence type="ECO:0000250" key="1"/>
<evidence type="ECO:0000305" key="2"/>